<organism>
    <name type="scientific">Leptospira interrogans serogroup Icterohaemorrhagiae serovar Lai (strain 56601)</name>
    <dbReference type="NCBI Taxonomy" id="189518"/>
    <lineage>
        <taxon>Bacteria</taxon>
        <taxon>Pseudomonadati</taxon>
        <taxon>Spirochaetota</taxon>
        <taxon>Spirochaetia</taxon>
        <taxon>Leptospirales</taxon>
        <taxon>Leptospiraceae</taxon>
        <taxon>Leptospira</taxon>
    </lineage>
</organism>
<gene>
    <name evidence="1" type="primary">lgt</name>
    <name type="ordered locus">LA_3004</name>
</gene>
<accession>Q8F1X4</accession>
<proteinExistence type="inferred from homology"/>
<dbReference type="EC" id="2.5.1.145" evidence="1"/>
<dbReference type="EMBL" id="AE010300">
    <property type="protein sequence ID" value="AAN50202.1"/>
    <property type="molecule type" value="Genomic_DNA"/>
</dbReference>
<dbReference type="RefSeq" id="NP_713184.1">
    <property type="nucleotide sequence ID" value="NC_004342.2"/>
</dbReference>
<dbReference type="RefSeq" id="WP_000567061.1">
    <property type="nucleotide sequence ID" value="NC_004342.2"/>
</dbReference>
<dbReference type="SMR" id="Q8F1X4"/>
<dbReference type="FunCoup" id="Q8F1X4">
    <property type="interactions" value="262"/>
</dbReference>
<dbReference type="STRING" id="189518.LA_3004"/>
<dbReference type="PaxDb" id="189518-LA_3004"/>
<dbReference type="EnsemblBacteria" id="AAN50202">
    <property type="protein sequence ID" value="AAN50202"/>
    <property type="gene ID" value="LA_3004"/>
</dbReference>
<dbReference type="KEGG" id="lil:LA_3004"/>
<dbReference type="PATRIC" id="fig|189518.3.peg.2982"/>
<dbReference type="HOGENOM" id="CLU_013386_1_2_12"/>
<dbReference type="InParanoid" id="Q8F1X4"/>
<dbReference type="OrthoDB" id="871140at2"/>
<dbReference type="UniPathway" id="UPA00664"/>
<dbReference type="Proteomes" id="UP000001408">
    <property type="component" value="Chromosome I"/>
</dbReference>
<dbReference type="GO" id="GO:0005886">
    <property type="term" value="C:plasma membrane"/>
    <property type="evidence" value="ECO:0000318"/>
    <property type="project" value="GO_Central"/>
</dbReference>
<dbReference type="GO" id="GO:0008961">
    <property type="term" value="F:phosphatidylglycerol-prolipoprotein diacylglyceryl transferase activity"/>
    <property type="evidence" value="ECO:0000318"/>
    <property type="project" value="GO_Central"/>
</dbReference>
<dbReference type="GO" id="GO:0042158">
    <property type="term" value="P:lipoprotein biosynthetic process"/>
    <property type="evidence" value="ECO:0000318"/>
    <property type="project" value="GO_Central"/>
</dbReference>
<dbReference type="HAMAP" id="MF_01147">
    <property type="entry name" value="Lgt"/>
    <property type="match status" value="1"/>
</dbReference>
<dbReference type="InterPro" id="IPR001640">
    <property type="entry name" value="Lgt"/>
</dbReference>
<dbReference type="NCBIfam" id="NF000777">
    <property type="entry name" value="PRK00052.3-2"/>
    <property type="match status" value="1"/>
</dbReference>
<dbReference type="PANTHER" id="PTHR30589:SF0">
    <property type="entry name" value="PHOSPHATIDYLGLYCEROL--PROLIPOPROTEIN DIACYLGLYCERYL TRANSFERASE"/>
    <property type="match status" value="1"/>
</dbReference>
<dbReference type="PANTHER" id="PTHR30589">
    <property type="entry name" value="PROLIPOPROTEIN DIACYLGLYCERYL TRANSFERASE"/>
    <property type="match status" value="1"/>
</dbReference>
<dbReference type="Pfam" id="PF01790">
    <property type="entry name" value="LGT"/>
    <property type="match status" value="1"/>
</dbReference>
<name>LGT_LEPIN</name>
<feature type="chain" id="PRO_0000172625" description="Phosphatidylglycerol--prolipoprotein diacylglyceryl transferase">
    <location>
        <begin position="1"/>
        <end position="318"/>
    </location>
</feature>
<feature type="transmembrane region" description="Helical" evidence="1">
    <location>
        <begin position="24"/>
        <end position="44"/>
    </location>
</feature>
<feature type="transmembrane region" description="Helical" evidence="1">
    <location>
        <begin position="60"/>
        <end position="80"/>
    </location>
</feature>
<feature type="transmembrane region" description="Helical" evidence="1">
    <location>
        <begin position="115"/>
        <end position="135"/>
    </location>
</feature>
<feature type="transmembrane region" description="Helical" evidence="1">
    <location>
        <begin position="198"/>
        <end position="218"/>
    </location>
</feature>
<feature type="transmembrane region" description="Helical" evidence="1">
    <location>
        <begin position="285"/>
        <end position="305"/>
    </location>
</feature>
<feature type="binding site" evidence="1">
    <location>
        <position position="164"/>
    </location>
    <ligand>
        <name>a 1,2-diacyl-sn-glycero-3-phospho-(1'-sn-glycerol)</name>
        <dbReference type="ChEBI" id="CHEBI:64716"/>
    </ligand>
</feature>
<protein>
    <recommendedName>
        <fullName evidence="1">Phosphatidylglycerol--prolipoprotein diacylglyceryl transferase</fullName>
        <ecNumber evidence="1">2.5.1.145</ecNumber>
    </recommendedName>
</protein>
<reference key="1">
    <citation type="journal article" date="2003" name="Nature">
        <title>Unique physiological and pathogenic features of Leptospira interrogans revealed by whole-genome sequencing.</title>
        <authorList>
            <person name="Ren S.-X."/>
            <person name="Fu G."/>
            <person name="Jiang X.-G."/>
            <person name="Zeng R."/>
            <person name="Miao Y.-G."/>
            <person name="Xu H."/>
            <person name="Zhang Y.-X."/>
            <person name="Xiong H."/>
            <person name="Lu G."/>
            <person name="Lu L.-F."/>
            <person name="Jiang H.-Q."/>
            <person name="Jia J."/>
            <person name="Tu Y.-F."/>
            <person name="Jiang J.-X."/>
            <person name="Gu W.-Y."/>
            <person name="Zhang Y.-Q."/>
            <person name="Cai Z."/>
            <person name="Sheng H.-H."/>
            <person name="Yin H.-F."/>
            <person name="Zhang Y."/>
            <person name="Zhu G.-F."/>
            <person name="Wan M."/>
            <person name="Huang H.-L."/>
            <person name="Qian Z."/>
            <person name="Wang S.-Y."/>
            <person name="Ma W."/>
            <person name="Yao Z.-J."/>
            <person name="Shen Y."/>
            <person name="Qiang B.-Q."/>
            <person name="Xia Q.-C."/>
            <person name="Guo X.-K."/>
            <person name="Danchin A."/>
            <person name="Saint Girons I."/>
            <person name="Somerville R.L."/>
            <person name="Wen Y.-M."/>
            <person name="Shi M.-H."/>
            <person name="Chen Z."/>
            <person name="Xu J.-G."/>
            <person name="Zhao G.-P."/>
        </authorList>
    </citation>
    <scope>NUCLEOTIDE SEQUENCE [LARGE SCALE GENOMIC DNA]</scope>
    <source>
        <strain>56601</strain>
    </source>
</reference>
<keyword id="KW-0997">Cell inner membrane</keyword>
<keyword id="KW-1003">Cell membrane</keyword>
<keyword id="KW-0472">Membrane</keyword>
<keyword id="KW-1185">Reference proteome</keyword>
<keyword id="KW-0808">Transferase</keyword>
<keyword id="KW-0812">Transmembrane</keyword>
<keyword id="KW-1133">Transmembrane helix</keyword>
<evidence type="ECO:0000255" key="1">
    <source>
        <dbReference type="HAMAP-Rule" id="MF_01147"/>
    </source>
</evidence>
<sequence>MIDRIPVPFLNPLFKFLFNREWDGPSTFSILMMIGFLTASYLLPKELKRRKLEPEHSDWLLLLGILGTLVGAKIFFVFEIWDQIFVETPGFDGKYIYPLTHWYGFPGRMSLWDNLFSGSGLVFYGGFLFGILFITLYMKYFQLDIASYLDAAVPSMAIGYAIGRLGCWVSGDGCYGFATNVEIPLLVFNYHGAHPSGVPVWNTPLIESIISFLFFFYFQFWARNQNFKKFSIGAQYLVLHGFARLLVEFLRVNKAVFPLMDPPAFVNIPNAEQNPEFLTQYYWHGFSQSQLVSIIIILVGAFFILKWKLWKKENTSNI</sequence>
<comment type="function">
    <text evidence="1">Catalyzes the transfer of the diacylglyceryl group from phosphatidylglycerol to the sulfhydryl group of the N-terminal cysteine of a prolipoprotein, the first step in the formation of mature lipoproteins.</text>
</comment>
<comment type="catalytic activity">
    <reaction evidence="1">
        <text>L-cysteinyl-[prolipoprotein] + a 1,2-diacyl-sn-glycero-3-phospho-(1'-sn-glycerol) = an S-1,2-diacyl-sn-glyceryl-L-cysteinyl-[prolipoprotein] + sn-glycerol 1-phosphate + H(+)</text>
        <dbReference type="Rhea" id="RHEA:56712"/>
        <dbReference type="Rhea" id="RHEA-COMP:14679"/>
        <dbReference type="Rhea" id="RHEA-COMP:14680"/>
        <dbReference type="ChEBI" id="CHEBI:15378"/>
        <dbReference type="ChEBI" id="CHEBI:29950"/>
        <dbReference type="ChEBI" id="CHEBI:57685"/>
        <dbReference type="ChEBI" id="CHEBI:64716"/>
        <dbReference type="ChEBI" id="CHEBI:140658"/>
        <dbReference type="EC" id="2.5.1.145"/>
    </reaction>
</comment>
<comment type="pathway">
    <text evidence="1">Protein modification; lipoprotein biosynthesis (diacylglyceryl transfer).</text>
</comment>
<comment type="subcellular location">
    <subcellularLocation>
        <location evidence="1">Cell inner membrane</location>
        <topology evidence="1">Multi-pass membrane protein</topology>
    </subcellularLocation>
</comment>
<comment type="similarity">
    <text evidence="1">Belongs to the Lgt family.</text>
</comment>